<evidence type="ECO:0000255" key="1">
    <source>
        <dbReference type="HAMAP-Rule" id="MF_00176"/>
    </source>
</evidence>
<dbReference type="EC" id="6.1.1.11" evidence="1"/>
<dbReference type="EMBL" id="CP000240">
    <property type="protein sequence ID" value="ABD02747.1"/>
    <property type="molecule type" value="Genomic_DNA"/>
</dbReference>
<dbReference type="RefSeq" id="WP_011433389.1">
    <property type="nucleotide sequence ID" value="NC_007776.1"/>
</dbReference>
<dbReference type="SMR" id="Q2JKN4"/>
<dbReference type="STRING" id="321332.CYB_1790"/>
<dbReference type="KEGG" id="cyb:CYB_1790"/>
<dbReference type="eggNOG" id="COG0172">
    <property type="taxonomic scope" value="Bacteria"/>
</dbReference>
<dbReference type="HOGENOM" id="CLU_023797_1_1_3"/>
<dbReference type="OrthoDB" id="9804647at2"/>
<dbReference type="UniPathway" id="UPA00906">
    <property type="reaction ID" value="UER00895"/>
</dbReference>
<dbReference type="Proteomes" id="UP000001938">
    <property type="component" value="Chromosome"/>
</dbReference>
<dbReference type="GO" id="GO:0005737">
    <property type="term" value="C:cytoplasm"/>
    <property type="evidence" value="ECO:0007669"/>
    <property type="project" value="UniProtKB-SubCell"/>
</dbReference>
<dbReference type="GO" id="GO:0005524">
    <property type="term" value="F:ATP binding"/>
    <property type="evidence" value="ECO:0007669"/>
    <property type="project" value="UniProtKB-UniRule"/>
</dbReference>
<dbReference type="GO" id="GO:0004828">
    <property type="term" value="F:serine-tRNA ligase activity"/>
    <property type="evidence" value="ECO:0007669"/>
    <property type="project" value="UniProtKB-UniRule"/>
</dbReference>
<dbReference type="GO" id="GO:0016260">
    <property type="term" value="P:selenocysteine biosynthetic process"/>
    <property type="evidence" value="ECO:0007669"/>
    <property type="project" value="UniProtKB-UniRule"/>
</dbReference>
<dbReference type="GO" id="GO:0006434">
    <property type="term" value="P:seryl-tRNA aminoacylation"/>
    <property type="evidence" value="ECO:0007669"/>
    <property type="project" value="UniProtKB-UniRule"/>
</dbReference>
<dbReference type="CDD" id="cd00770">
    <property type="entry name" value="SerRS_core"/>
    <property type="match status" value="1"/>
</dbReference>
<dbReference type="Gene3D" id="3.30.930.10">
    <property type="entry name" value="Bira Bifunctional Protein, Domain 2"/>
    <property type="match status" value="1"/>
</dbReference>
<dbReference type="Gene3D" id="1.10.287.40">
    <property type="entry name" value="Serine-tRNA synthetase, tRNA binding domain"/>
    <property type="match status" value="1"/>
</dbReference>
<dbReference type="HAMAP" id="MF_00176">
    <property type="entry name" value="Ser_tRNA_synth_type1"/>
    <property type="match status" value="1"/>
</dbReference>
<dbReference type="InterPro" id="IPR002314">
    <property type="entry name" value="aa-tRNA-synt_IIb"/>
</dbReference>
<dbReference type="InterPro" id="IPR006195">
    <property type="entry name" value="aa-tRNA-synth_II"/>
</dbReference>
<dbReference type="InterPro" id="IPR045864">
    <property type="entry name" value="aa-tRNA-synth_II/BPL/LPL"/>
</dbReference>
<dbReference type="InterPro" id="IPR002317">
    <property type="entry name" value="Ser-tRNA-ligase_type_1"/>
</dbReference>
<dbReference type="InterPro" id="IPR015866">
    <property type="entry name" value="Ser-tRNA-synth_1_N"/>
</dbReference>
<dbReference type="InterPro" id="IPR042103">
    <property type="entry name" value="SerRS_1_N_sf"/>
</dbReference>
<dbReference type="InterPro" id="IPR033729">
    <property type="entry name" value="SerRS_core"/>
</dbReference>
<dbReference type="InterPro" id="IPR010978">
    <property type="entry name" value="tRNA-bd_arm"/>
</dbReference>
<dbReference type="NCBIfam" id="TIGR00414">
    <property type="entry name" value="serS"/>
    <property type="match status" value="1"/>
</dbReference>
<dbReference type="PANTHER" id="PTHR43697:SF1">
    <property type="entry name" value="SERINE--TRNA LIGASE"/>
    <property type="match status" value="1"/>
</dbReference>
<dbReference type="PANTHER" id="PTHR43697">
    <property type="entry name" value="SERYL-TRNA SYNTHETASE"/>
    <property type="match status" value="1"/>
</dbReference>
<dbReference type="Pfam" id="PF02403">
    <property type="entry name" value="Seryl_tRNA_N"/>
    <property type="match status" value="1"/>
</dbReference>
<dbReference type="Pfam" id="PF00587">
    <property type="entry name" value="tRNA-synt_2b"/>
    <property type="match status" value="1"/>
</dbReference>
<dbReference type="PIRSF" id="PIRSF001529">
    <property type="entry name" value="Ser-tRNA-synth_IIa"/>
    <property type="match status" value="1"/>
</dbReference>
<dbReference type="PRINTS" id="PR00981">
    <property type="entry name" value="TRNASYNTHSER"/>
</dbReference>
<dbReference type="SUPFAM" id="SSF55681">
    <property type="entry name" value="Class II aaRS and biotin synthetases"/>
    <property type="match status" value="1"/>
</dbReference>
<dbReference type="SUPFAM" id="SSF46589">
    <property type="entry name" value="tRNA-binding arm"/>
    <property type="match status" value="1"/>
</dbReference>
<dbReference type="PROSITE" id="PS50862">
    <property type="entry name" value="AA_TRNA_LIGASE_II"/>
    <property type="match status" value="1"/>
</dbReference>
<sequence length="435" mass="48710">MLDLKLLRDRPEQVRQALQNRRATVDLDGILQLDRERRQLETRKGSLQAESNSLGKKVGEIIRQGADPQGPEVAALRQRGVDLKAEIAQLEQQERELEEEIRARLLTLPNLPLPSVPVGRDEADNVEVRRWGEELKPAHPVLPHDEIAEKLGLLEIGRAVKVAQSRFVAMVGAGAALERALIAMMLERHIAAGYTEVIPPFLVNSAALQGTGQLPKFAEDSFRCADDDLWLIPTAEVPLTNLYRDEMIPAESLPLYFCAYTPCFRREAGSYGRDTKGLIRLHQFQKVELVKVTRPDQSEAEHEKLVQDAEAILQMLELPYRVVELCSGDLGFAAARCFDLEVWFPSQNQYREISSCSNCWDFQARRANLRYKEAGQKGTQFVHTLNGSGLAVGRSLAALLENHQQPDGSIRIPKALRPFLSSRFLSEDGILIPAA</sequence>
<protein>
    <recommendedName>
        <fullName evidence="1">Serine--tRNA ligase</fullName>
        <ecNumber evidence="1">6.1.1.11</ecNumber>
    </recommendedName>
    <alternativeName>
        <fullName evidence="1">Seryl-tRNA synthetase</fullName>
        <shortName evidence="1">SerRS</shortName>
    </alternativeName>
    <alternativeName>
        <fullName evidence="1">Seryl-tRNA(Ser/Sec) synthetase</fullName>
    </alternativeName>
</protein>
<organism>
    <name type="scientific">Synechococcus sp. (strain JA-2-3B'a(2-13))</name>
    <name type="common">Cyanobacteria bacterium Yellowstone B-Prime</name>
    <dbReference type="NCBI Taxonomy" id="321332"/>
    <lineage>
        <taxon>Bacteria</taxon>
        <taxon>Bacillati</taxon>
        <taxon>Cyanobacteriota</taxon>
        <taxon>Cyanophyceae</taxon>
        <taxon>Synechococcales</taxon>
        <taxon>Synechococcaceae</taxon>
        <taxon>Synechococcus</taxon>
    </lineage>
</organism>
<gene>
    <name evidence="1" type="primary">serS</name>
    <name type="ordered locus">CYB_1790</name>
</gene>
<accession>Q2JKN4</accession>
<name>SYS_SYNJB</name>
<feature type="chain" id="PRO_1000019848" description="Serine--tRNA ligase">
    <location>
        <begin position="1"/>
        <end position="435"/>
    </location>
</feature>
<feature type="binding site" evidence="1">
    <location>
        <begin position="234"/>
        <end position="236"/>
    </location>
    <ligand>
        <name>L-serine</name>
        <dbReference type="ChEBI" id="CHEBI:33384"/>
    </ligand>
</feature>
<feature type="binding site" evidence="1">
    <location>
        <begin position="265"/>
        <end position="267"/>
    </location>
    <ligand>
        <name>ATP</name>
        <dbReference type="ChEBI" id="CHEBI:30616"/>
    </ligand>
</feature>
<feature type="binding site" evidence="1">
    <location>
        <position position="288"/>
    </location>
    <ligand>
        <name>L-serine</name>
        <dbReference type="ChEBI" id="CHEBI:33384"/>
    </ligand>
</feature>
<feature type="binding site" evidence="1">
    <location>
        <begin position="352"/>
        <end position="355"/>
    </location>
    <ligand>
        <name>ATP</name>
        <dbReference type="ChEBI" id="CHEBI:30616"/>
    </ligand>
</feature>
<feature type="binding site" evidence="1">
    <location>
        <position position="388"/>
    </location>
    <ligand>
        <name>L-serine</name>
        <dbReference type="ChEBI" id="CHEBI:33384"/>
    </ligand>
</feature>
<proteinExistence type="inferred from homology"/>
<keyword id="KW-0030">Aminoacyl-tRNA synthetase</keyword>
<keyword id="KW-0067">ATP-binding</keyword>
<keyword id="KW-0963">Cytoplasm</keyword>
<keyword id="KW-0436">Ligase</keyword>
<keyword id="KW-0547">Nucleotide-binding</keyword>
<keyword id="KW-0648">Protein biosynthesis</keyword>
<keyword id="KW-1185">Reference proteome</keyword>
<comment type="function">
    <text evidence="1">Catalyzes the attachment of serine to tRNA(Ser). Is also able to aminoacylate tRNA(Sec) with serine, to form the misacylated tRNA L-seryl-tRNA(Sec), which will be further converted into selenocysteinyl-tRNA(Sec).</text>
</comment>
<comment type="catalytic activity">
    <reaction evidence="1">
        <text>tRNA(Ser) + L-serine + ATP = L-seryl-tRNA(Ser) + AMP + diphosphate + H(+)</text>
        <dbReference type="Rhea" id="RHEA:12292"/>
        <dbReference type="Rhea" id="RHEA-COMP:9669"/>
        <dbReference type="Rhea" id="RHEA-COMP:9703"/>
        <dbReference type="ChEBI" id="CHEBI:15378"/>
        <dbReference type="ChEBI" id="CHEBI:30616"/>
        <dbReference type="ChEBI" id="CHEBI:33019"/>
        <dbReference type="ChEBI" id="CHEBI:33384"/>
        <dbReference type="ChEBI" id="CHEBI:78442"/>
        <dbReference type="ChEBI" id="CHEBI:78533"/>
        <dbReference type="ChEBI" id="CHEBI:456215"/>
        <dbReference type="EC" id="6.1.1.11"/>
    </reaction>
</comment>
<comment type="catalytic activity">
    <reaction evidence="1">
        <text>tRNA(Sec) + L-serine + ATP = L-seryl-tRNA(Sec) + AMP + diphosphate + H(+)</text>
        <dbReference type="Rhea" id="RHEA:42580"/>
        <dbReference type="Rhea" id="RHEA-COMP:9742"/>
        <dbReference type="Rhea" id="RHEA-COMP:10128"/>
        <dbReference type="ChEBI" id="CHEBI:15378"/>
        <dbReference type="ChEBI" id="CHEBI:30616"/>
        <dbReference type="ChEBI" id="CHEBI:33019"/>
        <dbReference type="ChEBI" id="CHEBI:33384"/>
        <dbReference type="ChEBI" id="CHEBI:78442"/>
        <dbReference type="ChEBI" id="CHEBI:78533"/>
        <dbReference type="ChEBI" id="CHEBI:456215"/>
        <dbReference type="EC" id="6.1.1.11"/>
    </reaction>
</comment>
<comment type="pathway">
    <text evidence="1">Aminoacyl-tRNA biosynthesis; selenocysteinyl-tRNA(Sec) biosynthesis; L-seryl-tRNA(Sec) from L-serine and tRNA(Sec): step 1/1.</text>
</comment>
<comment type="subunit">
    <text evidence="1">Homodimer. The tRNA molecule binds across the dimer.</text>
</comment>
<comment type="subcellular location">
    <subcellularLocation>
        <location evidence="1">Cytoplasm</location>
    </subcellularLocation>
</comment>
<comment type="domain">
    <text evidence="1">Consists of two distinct domains, a catalytic core and a N-terminal extension that is involved in tRNA binding.</text>
</comment>
<comment type="similarity">
    <text evidence="1">Belongs to the class-II aminoacyl-tRNA synthetase family. Type-1 seryl-tRNA synthetase subfamily.</text>
</comment>
<reference key="1">
    <citation type="journal article" date="2007" name="ISME J.">
        <title>Population level functional diversity in a microbial community revealed by comparative genomic and metagenomic analyses.</title>
        <authorList>
            <person name="Bhaya D."/>
            <person name="Grossman A.R."/>
            <person name="Steunou A.-S."/>
            <person name="Khuri N."/>
            <person name="Cohan F.M."/>
            <person name="Hamamura N."/>
            <person name="Melendrez M.C."/>
            <person name="Bateson M.M."/>
            <person name="Ward D.M."/>
            <person name="Heidelberg J.F."/>
        </authorList>
    </citation>
    <scope>NUCLEOTIDE SEQUENCE [LARGE SCALE GENOMIC DNA]</scope>
    <source>
        <strain>JA-2-3B'a(2-13)</strain>
    </source>
</reference>